<dbReference type="EMBL" id="AE016820">
    <property type="protein sequence ID" value="AAS54524.1"/>
    <property type="molecule type" value="Genomic_DNA"/>
</dbReference>
<dbReference type="RefSeq" id="NP_986700.1">
    <property type="nucleotide sequence ID" value="NM_211762.1"/>
</dbReference>
<dbReference type="SMR" id="Q750C2"/>
<dbReference type="FunCoup" id="Q750C2">
    <property type="interactions" value="298"/>
</dbReference>
<dbReference type="STRING" id="284811.Q750C2"/>
<dbReference type="EnsemblFungi" id="AAS54524">
    <property type="protein sequence ID" value="AAS54524"/>
    <property type="gene ID" value="AGOS_AGR035C"/>
</dbReference>
<dbReference type="GeneID" id="4623000"/>
<dbReference type="KEGG" id="ago:AGOS_AGR035C"/>
<dbReference type="eggNOG" id="KOG3321">
    <property type="taxonomic scope" value="Eukaryota"/>
</dbReference>
<dbReference type="HOGENOM" id="CLU_051208_4_0_1"/>
<dbReference type="InParanoid" id="Q750C2"/>
<dbReference type="OMA" id="LRKHQFY"/>
<dbReference type="OrthoDB" id="366214at2759"/>
<dbReference type="Proteomes" id="UP000000591">
    <property type="component" value="Chromosome VII"/>
</dbReference>
<dbReference type="GO" id="GO:0005763">
    <property type="term" value="C:mitochondrial small ribosomal subunit"/>
    <property type="evidence" value="ECO:0007669"/>
    <property type="project" value="EnsemblFungi"/>
</dbReference>
<dbReference type="GO" id="GO:0005739">
    <property type="term" value="C:mitochondrion"/>
    <property type="evidence" value="ECO:0000318"/>
    <property type="project" value="GO_Central"/>
</dbReference>
<dbReference type="GO" id="GO:0015935">
    <property type="term" value="C:small ribosomal subunit"/>
    <property type="evidence" value="ECO:0000318"/>
    <property type="project" value="GO_Central"/>
</dbReference>
<dbReference type="GO" id="GO:0003735">
    <property type="term" value="F:structural constituent of ribosome"/>
    <property type="evidence" value="ECO:0000318"/>
    <property type="project" value="GO_Central"/>
</dbReference>
<dbReference type="GO" id="GO:0006412">
    <property type="term" value="P:translation"/>
    <property type="evidence" value="ECO:0007669"/>
    <property type="project" value="InterPro"/>
</dbReference>
<dbReference type="FunFam" id="3.30.70.600:FF:000003">
    <property type="entry name" value="30S ribosomal protein S10"/>
    <property type="match status" value="1"/>
</dbReference>
<dbReference type="Gene3D" id="3.30.70.600">
    <property type="entry name" value="Ribosomal protein S10 domain"/>
    <property type="match status" value="1"/>
</dbReference>
<dbReference type="HAMAP" id="MF_00508">
    <property type="entry name" value="Ribosomal_uS10"/>
    <property type="match status" value="1"/>
</dbReference>
<dbReference type="InterPro" id="IPR001848">
    <property type="entry name" value="Ribosomal_uS10"/>
</dbReference>
<dbReference type="InterPro" id="IPR027486">
    <property type="entry name" value="Ribosomal_uS10_dom"/>
</dbReference>
<dbReference type="InterPro" id="IPR036838">
    <property type="entry name" value="Ribosomal_uS10_dom_sf"/>
</dbReference>
<dbReference type="NCBIfam" id="TIGR01049">
    <property type="entry name" value="rpsJ_bact"/>
    <property type="match status" value="1"/>
</dbReference>
<dbReference type="PANTHER" id="PTHR11700">
    <property type="entry name" value="30S RIBOSOMAL PROTEIN S10 FAMILY MEMBER"/>
    <property type="match status" value="1"/>
</dbReference>
<dbReference type="Pfam" id="PF00338">
    <property type="entry name" value="Ribosomal_S10"/>
    <property type="match status" value="1"/>
</dbReference>
<dbReference type="PRINTS" id="PR00971">
    <property type="entry name" value="RIBOSOMALS10"/>
</dbReference>
<dbReference type="SMART" id="SM01403">
    <property type="entry name" value="Ribosomal_S10"/>
    <property type="match status" value="1"/>
</dbReference>
<dbReference type="SUPFAM" id="SSF54999">
    <property type="entry name" value="Ribosomal protein S10"/>
    <property type="match status" value="1"/>
</dbReference>
<gene>
    <name type="primary">RSM10</name>
    <name type="ordered locus">AGR035C</name>
</gene>
<reference key="1">
    <citation type="journal article" date="2004" name="Science">
        <title>The Ashbya gossypii genome as a tool for mapping the ancient Saccharomyces cerevisiae genome.</title>
        <authorList>
            <person name="Dietrich F.S."/>
            <person name="Voegeli S."/>
            <person name="Brachat S."/>
            <person name="Lerch A."/>
            <person name="Gates K."/>
            <person name="Steiner S."/>
            <person name="Mohr C."/>
            <person name="Poehlmann R."/>
            <person name="Luedi P."/>
            <person name="Choi S."/>
            <person name="Wing R.A."/>
            <person name="Flavier A."/>
            <person name="Gaffney T.D."/>
            <person name="Philippsen P."/>
        </authorList>
    </citation>
    <scope>NUCLEOTIDE SEQUENCE [LARGE SCALE GENOMIC DNA]</scope>
    <source>
        <strain>ATCC 10895 / CBS 109.51 / FGSC 9923 / NRRL Y-1056</strain>
    </source>
</reference>
<reference key="2">
    <citation type="journal article" date="2013" name="G3 (Bethesda)">
        <title>Genomes of Ashbya fungi isolated from insects reveal four mating-type loci, numerous translocations, lack of transposons, and distinct gene duplications.</title>
        <authorList>
            <person name="Dietrich F.S."/>
            <person name="Voegeli S."/>
            <person name="Kuo S."/>
            <person name="Philippsen P."/>
        </authorList>
    </citation>
    <scope>GENOME REANNOTATION</scope>
    <source>
        <strain>ATCC 10895 / CBS 109.51 / FGSC 9923 / NRRL Y-1056</strain>
    </source>
</reference>
<protein>
    <recommendedName>
        <fullName evidence="3">Small ribosomal subunit protein uS10m</fullName>
    </recommendedName>
    <alternativeName>
        <fullName>37S ribosomal protein S10, mitochondrial</fullName>
    </alternativeName>
    <alternativeName>
        <fullName>Mitochondrial ribosomal small subunit protein 10</fullName>
    </alternativeName>
</protein>
<sequence>MLSVFGLRTVARCNSTLASGGARAAAAAGGKAGAQYSALPKSVHALYFQPLKLPVKHHDLVADLQLRAFDNQSLDFFANFALRVGYYLGIPMTGPKPLPTRRERWTVIRAPFAHAKSKENFERHTHKRLLRLWDANPEVVEMFLSYITKHSMAGVGMKCNMFQRESVQLAQELADVPLAPGAPQTADEVVGAKVAELMQSPEFKKHL</sequence>
<comment type="function">
    <text evidence="1">Involved in mitochondrial genome encoded proteins translation. Involved in the binding of tRNA to the ribosomes (By similarity).</text>
</comment>
<comment type="subunit">
    <text evidence="1">Part of the mitochondrial small ribosomal subunit.</text>
</comment>
<comment type="subcellular location">
    <subcellularLocation>
        <location evidence="1">Mitochondrion</location>
    </subcellularLocation>
</comment>
<comment type="similarity">
    <text evidence="3">Belongs to the universal ribosomal protein uS10 family.</text>
</comment>
<feature type="transit peptide" description="Mitochondrion" evidence="2">
    <location>
        <begin position="1"/>
        <end position="24"/>
    </location>
</feature>
<feature type="chain" id="PRO_0000042755" description="Small ribosomal subunit protein uS10m">
    <location>
        <begin position="25"/>
        <end position="207"/>
    </location>
</feature>
<proteinExistence type="inferred from homology"/>
<accession>Q750C2</accession>
<keyword id="KW-0496">Mitochondrion</keyword>
<keyword id="KW-1185">Reference proteome</keyword>
<keyword id="KW-0687">Ribonucleoprotein</keyword>
<keyword id="KW-0689">Ribosomal protein</keyword>
<keyword id="KW-0809">Transit peptide</keyword>
<evidence type="ECO:0000250" key="1"/>
<evidence type="ECO:0000255" key="2"/>
<evidence type="ECO:0000305" key="3"/>
<name>RT10_EREGS</name>
<organism>
    <name type="scientific">Eremothecium gossypii (strain ATCC 10895 / CBS 109.51 / FGSC 9923 / NRRL Y-1056)</name>
    <name type="common">Yeast</name>
    <name type="synonym">Ashbya gossypii</name>
    <dbReference type="NCBI Taxonomy" id="284811"/>
    <lineage>
        <taxon>Eukaryota</taxon>
        <taxon>Fungi</taxon>
        <taxon>Dikarya</taxon>
        <taxon>Ascomycota</taxon>
        <taxon>Saccharomycotina</taxon>
        <taxon>Saccharomycetes</taxon>
        <taxon>Saccharomycetales</taxon>
        <taxon>Saccharomycetaceae</taxon>
        <taxon>Eremothecium</taxon>
    </lineage>
</organism>